<protein>
    <recommendedName>
        <fullName>Arginine deiminase</fullName>
        <shortName>ADI</shortName>
        <ecNumber>3.5.3.6</ecNumber>
    </recommendedName>
    <alternativeName>
        <fullName>Arginine dihydrolase</fullName>
        <shortName>AD</shortName>
    </alternativeName>
</protein>
<name>ARCA_PSEAE</name>
<gene>
    <name type="primary">arcA</name>
    <name type="ordered locus">PA5171</name>
</gene>
<accession>P13981</accession>
<reference key="1">
    <citation type="journal article" date="1989" name="Eur. J. Biochem.">
        <title>Sequence analysis and expression of the arginine-deiminase and carbamate-kinase genes of Pseudomonas aeruginosa.</title>
        <authorList>
            <person name="Baur H."/>
            <person name="Luethi E."/>
            <person name="Stalon V."/>
            <person name="Mercenier A."/>
            <person name="Haas D."/>
        </authorList>
    </citation>
    <scope>NUCLEOTIDE SEQUENCE [GENOMIC DNA]</scope>
    <scope>PROTEIN SEQUENCE OF 2-16</scope>
    <source>
        <strain>ATCC 15692 / DSM 22644 / CIP 104116 / JCM 14847 / LMG 12228 / 1C / PRS 101 / PAO1</strain>
    </source>
</reference>
<reference key="2">
    <citation type="journal article" date="2000" name="Nature">
        <title>Complete genome sequence of Pseudomonas aeruginosa PAO1, an opportunistic pathogen.</title>
        <authorList>
            <person name="Stover C.K."/>
            <person name="Pham X.-Q.T."/>
            <person name="Erwin A.L."/>
            <person name="Mizoguchi S.D."/>
            <person name="Warrener P."/>
            <person name="Hickey M.J."/>
            <person name="Brinkman F.S.L."/>
            <person name="Hufnagle W.O."/>
            <person name="Kowalik D.J."/>
            <person name="Lagrou M."/>
            <person name="Garber R.L."/>
            <person name="Goltry L."/>
            <person name="Tolentino E."/>
            <person name="Westbrock-Wadman S."/>
            <person name="Yuan Y."/>
            <person name="Brody L.L."/>
            <person name="Coulter S.N."/>
            <person name="Folger K.R."/>
            <person name="Kas A."/>
            <person name="Larbig K."/>
            <person name="Lim R.M."/>
            <person name="Smith K.A."/>
            <person name="Spencer D.H."/>
            <person name="Wong G.K.-S."/>
            <person name="Wu Z."/>
            <person name="Paulsen I.T."/>
            <person name="Reizer J."/>
            <person name="Saier M.H. Jr."/>
            <person name="Hancock R.E.W."/>
            <person name="Lory S."/>
            <person name="Olson M.V."/>
        </authorList>
    </citation>
    <scope>NUCLEOTIDE SEQUENCE [LARGE SCALE GENOMIC DNA]</scope>
    <source>
        <strain>ATCC 15692 / DSM 22644 / CIP 104116 / JCM 14847 / LMG 12228 / 1C / PRS 101 / PAO1</strain>
    </source>
</reference>
<reference key="3">
    <citation type="journal article" date="1990" name="Gene">
        <title>The arc operon for anaerobic arginine catabolism in Pseudomonas aeruginosa contains an additional gene, arcD, encoding a membrane protein.</title>
        <authorList>
            <person name="Luethi E."/>
            <person name="Baur H."/>
            <person name="Gamper M."/>
            <person name="Brunner F."/>
            <person name="Villeval D."/>
            <person name="Mercenier A."/>
            <person name="Haas D."/>
        </authorList>
    </citation>
    <scope>NUCLEOTIDE SEQUENCE [GENOMIC DNA] OF 1-3</scope>
    <source>
        <strain>ATCC 15692 / DSM 22644 / CIP 104116 / JCM 14847 / LMG 12228 / 1C / PRS 101 / PAO1</strain>
    </source>
</reference>
<dbReference type="EC" id="3.5.3.6"/>
<dbReference type="EMBL" id="X14694">
    <property type="protein sequence ID" value="CAA32824.1"/>
    <property type="molecule type" value="Genomic_DNA"/>
</dbReference>
<dbReference type="EMBL" id="AE004091">
    <property type="protein sequence ID" value="AAG08556.1"/>
    <property type="molecule type" value="Genomic_DNA"/>
</dbReference>
<dbReference type="EMBL" id="M33223">
    <property type="status" value="NOT_ANNOTATED_CDS"/>
    <property type="molecule type" value="Genomic_DNA"/>
</dbReference>
<dbReference type="PIR" id="S02138">
    <property type="entry name" value="S02138"/>
</dbReference>
<dbReference type="RefSeq" id="NP_253858.1">
    <property type="nucleotide sequence ID" value="NC_002516.2"/>
</dbReference>
<dbReference type="RefSeq" id="WP_003111744.1">
    <property type="nucleotide sequence ID" value="NZ_QZGE01000002.1"/>
</dbReference>
<dbReference type="PDB" id="1RXX">
    <property type="method" value="X-ray"/>
    <property type="resolution" value="2.45 A"/>
    <property type="chains" value="A/B/C/D=2-418"/>
</dbReference>
<dbReference type="PDB" id="2A9G">
    <property type="method" value="X-ray"/>
    <property type="resolution" value="2.30 A"/>
    <property type="chains" value="A/B/C/D=1-418"/>
</dbReference>
<dbReference type="PDB" id="2AAF">
    <property type="method" value="X-ray"/>
    <property type="resolution" value="2.30 A"/>
    <property type="chains" value="A/B/C/D=1-418"/>
</dbReference>
<dbReference type="PDB" id="2ABR">
    <property type="method" value="X-ray"/>
    <property type="resolution" value="2.90 A"/>
    <property type="chains" value="A/B/C/D=1-418"/>
</dbReference>
<dbReference type="PDB" id="2ACI">
    <property type="method" value="X-ray"/>
    <property type="resolution" value="2.50 A"/>
    <property type="chains" value="A/B/C/D=1-418"/>
</dbReference>
<dbReference type="PDBsum" id="1RXX"/>
<dbReference type="PDBsum" id="2A9G"/>
<dbReference type="PDBsum" id="2AAF"/>
<dbReference type="PDBsum" id="2ABR"/>
<dbReference type="PDBsum" id="2ACI"/>
<dbReference type="SMR" id="P13981"/>
<dbReference type="STRING" id="208964.PA5171"/>
<dbReference type="DrugBank" id="DB04671">
    <property type="generic name" value="[(1S)-4-[[Amino-[(2R)-2-amino-2-carboxyethyl]sulfanylmethylidene]amino]-1-carboxybutyl]azanium"/>
</dbReference>
<dbReference type="PaxDb" id="208964-PA5171"/>
<dbReference type="DNASU" id="881801"/>
<dbReference type="GeneID" id="881801"/>
<dbReference type="KEGG" id="pae:PA5171"/>
<dbReference type="PATRIC" id="fig|208964.12.peg.5419"/>
<dbReference type="PseudoCAP" id="PA5171"/>
<dbReference type="HOGENOM" id="CLU_052662_0_0_6"/>
<dbReference type="InParanoid" id="P13981"/>
<dbReference type="OrthoDB" id="9807502at2"/>
<dbReference type="PhylomeDB" id="P13981"/>
<dbReference type="BioCyc" id="PAER208964:G1FZ6-5288-MONOMER"/>
<dbReference type="BRENDA" id="3.5.3.6">
    <property type="organism ID" value="5087"/>
</dbReference>
<dbReference type="SABIO-RK" id="P13981"/>
<dbReference type="UniPathway" id="UPA00254">
    <property type="reaction ID" value="UER00364"/>
</dbReference>
<dbReference type="EvolutionaryTrace" id="P13981"/>
<dbReference type="Proteomes" id="UP000002438">
    <property type="component" value="Chromosome"/>
</dbReference>
<dbReference type="GO" id="GO:0005737">
    <property type="term" value="C:cytoplasm"/>
    <property type="evidence" value="ECO:0007669"/>
    <property type="project" value="UniProtKB-SubCell"/>
</dbReference>
<dbReference type="GO" id="GO:0016990">
    <property type="term" value="F:arginine deiminase activity"/>
    <property type="evidence" value="ECO:0000315"/>
    <property type="project" value="PseudoCAP"/>
</dbReference>
<dbReference type="GO" id="GO:0019547">
    <property type="term" value="P:arginine catabolic process to ornithine"/>
    <property type="evidence" value="ECO:0007669"/>
    <property type="project" value="UniProtKB-UniRule"/>
</dbReference>
<dbReference type="GO" id="GO:0019546">
    <property type="term" value="P:arginine deiminase pathway"/>
    <property type="evidence" value="ECO:0000315"/>
    <property type="project" value="PseudoCAP"/>
</dbReference>
<dbReference type="Gene3D" id="1.10.3930.10">
    <property type="entry name" value="Arginine deiminase"/>
    <property type="match status" value="1"/>
</dbReference>
<dbReference type="Gene3D" id="3.75.10.10">
    <property type="entry name" value="L-arginine/glycine Amidinotransferase, Chain A"/>
    <property type="match status" value="1"/>
</dbReference>
<dbReference type="HAMAP" id="MF_00242">
    <property type="entry name" value="Arg_deiminase"/>
    <property type="match status" value="1"/>
</dbReference>
<dbReference type="InterPro" id="IPR003876">
    <property type="entry name" value="Arg_deiminase"/>
</dbReference>
<dbReference type="NCBIfam" id="TIGR01078">
    <property type="entry name" value="arcA"/>
    <property type="match status" value="1"/>
</dbReference>
<dbReference type="NCBIfam" id="NF002381">
    <property type="entry name" value="PRK01388.1"/>
    <property type="match status" value="1"/>
</dbReference>
<dbReference type="PANTHER" id="PTHR47271">
    <property type="entry name" value="ARGININE DEIMINASE"/>
    <property type="match status" value="1"/>
</dbReference>
<dbReference type="PANTHER" id="PTHR47271:SF3">
    <property type="entry name" value="ARGININE DEIMINASE"/>
    <property type="match status" value="1"/>
</dbReference>
<dbReference type="Pfam" id="PF02274">
    <property type="entry name" value="ADI"/>
    <property type="match status" value="1"/>
</dbReference>
<dbReference type="PIRSF" id="PIRSF006356">
    <property type="entry name" value="Arg_deiminase"/>
    <property type="match status" value="1"/>
</dbReference>
<dbReference type="PRINTS" id="PR01466">
    <property type="entry name" value="ARGDEIMINASE"/>
</dbReference>
<dbReference type="SUPFAM" id="SSF55909">
    <property type="entry name" value="Pentein"/>
    <property type="match status" value="1"/>
</dbReference>
<sequence length="418" mass="46436">MSTEKTKLGVHSEAGKLRKVMVCSPGLAHQRLTPSNCDELLFDDVIWVNQAKRDHFDFVTKMRERGIDVLEMHNLLTETIQNPEALKWILDRKITADSVGLGLTSELRSWLESLEPRKLAEYLIGGVAADDLPASEGANILKMYREYLGHSSFLLPPLPNTQFTRDTTCWIYGGVTLNPMYWPARRQETLLTTAIYKFHPEFANAEFEIWYGDPDKDHGSSTLEGGDVMPIGNGVVLIGMGERSSRQAIGQVAQSLFAKGAAERVIVAGLPKSRAAMHLDTVFSFCDRDLVTVFPEVVKEIVPFSLRPDPSSPYGMNIRREEKTFLEVVAESLGLKKLRVVETGGNSFAAEREQWDDGNNVVCLEPGVVVGYDRNTYTNTLLRKAGVEVITISASELGRGRGGGHCMTCPIVRDPIDY</sequence>
<keyword id="KW-0002">3D-structure</keyword>
<keyword id="KW-0056">Arginine metabolism</keyword>
<keyword id="KW-0963">Cytoplasm</keyword>
<keyword id="KW-0903">Direct protein sequencing</keyword>
<keyword id="KW-0378">Hydrolase</keyword>
<keyword id="KW-1185">Reference proteome</keyword>
<comment type="catalytic activity">
    <reaction>
        <text>L-arginine + H2O = L-citrulline + NH4(+)</text>
        <dbReference type="Rhea" id="RHEA:19597"/>
        <dbReference type="ChEBI" id="CHEBI:15377"/>
        <dbReference type="ChEBI" id="CHEBI:28938"/>
        <dbReference type="ChEBI" id="CHEBI:32682"/>
        <dbReference type="ChEBI" id="CHEBI:57743"/>
        <dbReference type="EC" id="3.5.3.6"/>
    </reaction>
</comment>
<comment type="activity regulation">
    <text>Activated by Mg(2+) or Mn(2+) and strongly inhibited by Zn(2+).</text>
</comment>
<comment type="pathway">
    <text>Amino-acid degradation; L-arginine degradation via ADI pathway; carbamoyl phosphate from L-arginine: step 1/2.</text>
</comment>
<comment type="subunit">
    <text>Homotetramer (Possible).</text>
</comment>
<comment type="subcellular location">
    <subcellularLocation>
        <location evidence="3">Cytoplasm</location>
    </subcellularLocation>
</comment>
<comment type="similarity">
    <text evidence="3">Belongs to the arginine deiminase family.</text>
</comment>
<organism>
    <name type="scientific">Pseudomonas aeruginosa (strain ATCC 15692 / DSM 22644 / CIP 104116 / JCM 14847 / LMG 12228 / 1C / PRS 101 / PAO1)</name>
    <dbReference type="NCBI Taxonomy" id="208964"/>
    <lineage>
        <taxon>Bacteria</taxon>
        <taxon>Pseudomonadati</taxon>
        <taxon>Pseudomonadota</taxon>
        <taxon>Gammaproteobacteria</taxon>
        <taxon>Pseudomonadales</taxon>
        <taxon>Pseudomonadaceae</taxon>
        <taxon>Pseudomonas</taxon>
    </lineage>
</organism>
<proteinExistence type="evidence at protein level"/>
<evidence type="ECO:0000250" key="1"/>
<evidence type="ECO:0000269" key="2">
    <source>
    </source>
</evidence>
<evidence type="ECO:0000305" key="3"/>
<evidence type="ECO:0007829" key="4">
    <source>
        <dbReference type="PDB" id="1RXX"/>
    </source>
</evidence>
<evidence type="ECO:0007829" key="5">
    <source>
        <dbReference type="PDB" id="2A9G"/>
    </source>
</evidence>
<evidence type="ECO:0007829" key="6">
    <source>
        <dbReference type="PDB" id="2AAF"/>
    </source>
</evidence>
<evidence type="ECO:0007829" key="7">
    <source>
        <dbReference type="PDB" id="2ABR"/>
    </source>
</evidence>
<feature type="initiator methionine" description="Removed" evidence="2">
    <location>
        <position position="1"/>
    </location>
</feature>
<feature type="chain" id="PRO_0000182225" description="Arginine deiminase">
    <location>
        <begin position="2"/>
        <end position="418"/>
    </location>
</feature>
<feature type="active site" description="Amidino-cysteine intermediate" evidence="1">
    <location>
        <position position="406"/>
    </location>
</feature>
<feature type="strand" evidence="4">
    <location>
        <begin position="8"/>
        <end position="10"/>
    </location>
</feature>
<feature type="strand" evidence="5">
    <location>
        <begin position="13"/>
        <end position="15"/>
    </location>
</feature>
<feature type="strand" evidence="5">
    <location>
        <begin position="17"/>
        <end position="22"/>
    </location>
</feature>
<feature type="helix" evidence="5">
    <location>
        <begin position="27"/>
        <end position="30"/>
    </location>
</feature>
<feature type="turn" evidence="5">
    <location>
        <begin position="34"/>
        <end position="41"/>
    </location>
</feature>
<feature type="helix" evidence="5">
    <location>
        <begin position="48"/>
        <end position="62"/>
    </location>
</feature>
<feature type="turn" evidence="5">
    <location>
        <begin position="63"/>
        <end position="66"/>
    </location>
</feature>
<feature type="strand" evidence="5">
    <location>
        <begin position="68"/>
        <end position="71"/>
    </location>
</feature>
<feature type="helix" evidence="5">
    <location>
        <begin position="72"/>
        <end position="80"/>
    </location>
</feature>
<feature type="helix" evidence="5">
    <location>
        <begin position="83"/>
        <end position="93"/>
    </location>
</feature>
<feature type="turn" evidence="5">
    <location>
        <begin position="96"/>
        <end position="99"/>
    </location>
</feature>
<feature type="turn" evidence="5">
    <location>
        <begin position="101"/>
        <end position="103"/>
    </location>
</feature>
<feature type="helix" evidence="5">
    <location>
        <begin position="104"/>
        <end position="113"/>
    </location>
</feature>
<feature type="helix" evidence="5">
    <location>
        <begin position="116"/>
        <end position="125"/>
    </location>
</feature>
<feature type="helix" evidence="5">
    <location>
        <begin position="129"/>
        <end position="131"/>
    </location>
</feature>
<feature type="helix" evidence="5">
    <location>
        <begin position="136"/>
        <end position="147"/>
    </location>
</feature>
<feature type="strand" evidence="6">
    <location>
        <begin position="153"/>
        <end position="155"/>
    </location>
</feature>
<feature type="helix" evidence="5">
    <location>
        <begin position="159"/>
        <end position="162"/>
    </location>
</feature>
<feature type="helix" evidence="5">
    <location>
        <begin position="164"/>
        <end position="167"/>
    </location>
</feature>
<feature type="strand" evidence="5">
    <location>
        <begin position="168"/>
        <end position="170"/>
    </location>
</feature>
<feature type="strand" evidence="5">
    <location>
        <begin position="172"/>
        <end position="177"/>
    </location>
</feature>
<feature type="helix" evidence="5">
    <location>
        <begin position="183"/>
        <end position="185"/>
    </location>
</feature>
<feature type="helix" evidence="5">
    <location>
        <begin position="188"/>
        <end position="198"/>
    </location>
</feature>
<feature type="turn" evidence="5">
    <location>
        <begin position="200"/>
        <end position="204"/>
    </location>
</feature>
<feature type="strand" evidence="5">
    <location>
        <begin position="208"/>
        <end position="212"/>
    </location>
</feature>
<feature type="helix" evidence="5">
    <location>
        <begin position="225"/>
        <end position="227"/>
    </location>
</feature>
<feature type="strand" evidence="7">
    <location>
        <begin position="228"/>
        <end position="230"/>
    </location>
</feature>
<feature type="strand" evidence="5">
    <location>
        <begin position="232"/>
        <end position="244"/>
    </location>
</feature>
<feature type="helix" evidence="5">
    <location>
        <begin position="246"/>
        <end position="258"/>
    </location>
</feature>
<feature type="strand" evidence="5">
    <location>
        <begin position="263"/>
        <end position="269"/>
    </location>
</feature>
<feature type="turn" evidence="6">
    <location>
        <begin position="272"/>
        <end position="276"/>
    </location>
</feature>
<feature type="helix" evidence="5">
    <location>
        <begin position="279"/>
        <end position="282"/>
    </location>
</feature>
<feature type="strand" evidence="5">
    <location>
        <begin position="283"/>
        <end position="287"/>
    </location>
</feature>
<feature type="strand" evidence="5">
    <location>
        <begin position="290"/>
        <end position="293"/>
    </location>
</feature>
<feature type="helix" evidence="5">
    <location>
        <begin position="295"/>
        <end position="298"/>
    </location>
</feature>
<feature type="strand" evidence="5">
    <location>
        <begin position="302"/>
        <end position="308"/>
    </location>
</feature>
<feature type="strand" evidence="5">
    <location>
        <begin position="315"/>
        <end position="320"/>
    </location>
</feature>
<feature type="helix" evidence="5">
    <location>
        <begin position="325"/>
        <end position="332"/>
    </location>
</feature>
<feature type="strand" evidence="5">
    <location>
        <begin position="339"/>
        <end position="342"/>
    </location>
</feature>
<feature type="strand" evidence="5">
    <location>
        <begin position="362"/>
        <end position="365"/>
    </location>
</feature>
<feature type="strand" evidence="5">
    <location>
        <begin position="368"/>
        <end position="372"/>
    </location>
</feature>
<feature type="helix" evidence="7">
    <location>
        <begin position="373"/>
        <end position="375"/>
    </location>
</feature>
<feature type="helix" evidence="5">
    <location>
        <begin position="376"/>
        <end position="384"/>
    </location>
</feature>
<feature type="strand" evidence="5">
    <location>
        <begin position="388"/>
        <end position="392"/>
    </location>
</feature>
<feature type="helix" evidence="5">
    <location>
        <begin position="394"/>
        <end position="397"/>
    </location>
</feature>
<feature type="helix" evidence="5">
    <location>
        <begin position="398"/>
        <end position="400"/>
    </location>
</feature>
<feature type="helix" evidence="5">
    <location>
        <begin position="405"/>
        <end position="407"/>
    </location>
</feature>
<feature type="strand" evidence="5">
    <location>
        <begin position="409"/>
        <end position="413"/>
    </location>
</feature>